<evidence type="ECO:0000250" key="1"/>
<evidence type="ECO:0000255" key="2">
    <source>
        <dbReference type="PROSITE-ProRule" id="PRU00539"/>
    </source>
</evidence>
<evidence type="ECO:0000255" key="3">
    <source>
        <dbReference type="PROSITE-ProRule" id="PRU00990"/>
    </source>
</evidence>
<evidence type="ECO:0000255" key="4">
    <source>
        <dbReference type="PROSITE-ProRule" id="PRU01079"/>
    </source>
</evidence>
<evidence type="ECO:0000269" key="5">
    <source>
    </source>
</evidence>
<evidence type="ECO:0000269" key="6">
    <source>
    </source>
</evidence>
<evidence type="ECO:0000269" key="7">
    <source>
    </source>
</evidence>
<evidence type="ECO:0000269" key="8">
    <source>
    </source>
</evidence>
<evidence type="ECO:0000269" key="9">
    <source>
    </source>
</evidence>
<evidence type="ECO:0000269" key="10">
    <source>
    </source>
</evidence>
<evidence type="ECO:0000305" key="11"/>
<evidence type="ECO:0007744" key="12">
    <source>
        <dbReference type="PDB" id="3WRX"/>
    </source>
</evidence>
<evidence type="ECO:0007744" key="13">
    <source>
        <dbReference type="PDB" id="3WRY"/>
    </source>
</evidence>
<evidence type="ECO:0007829" key="14">
    <source>
        <dbReference type="PDB" id="3VKW"/>
    </source>
</evidence>
<evidence type="ECO:0007829" key="15">
    <source>
        <dbReference type="PDB" id="3WRY"/>
    </source>
</evidence>
<dbReference type="EC" id="2.1.1.-"/>
<dbReference type="EC" id="2.7.7.-"/>
<dbReference type="EC" id="2.7.7.48" evidence="2"/>
<dbReference type="EC" id="3.6.4.13"/>
<dbReference type="EMBL" id="X02144">
    <property type="protein sequence ID" value="CAA26085.1"/>
    <property type="molecule type" value="Genomic_RNA"/>
</dbReference>
<dbReference type="EMBL" id="X02144">
    <property type="protein sequence ID" value="CAA26082.1"/>
    <property type="molecule type" value="Genomic_RNA"/>
</dbReference>
<dbReference type="PIR" id="A04195">
    <property type="entry name" value="WMTM8T"/>
</dbReference>
<dbReference type="RefSeq" id="NP_078446.1">
    <property type="nucleotide sequence ID" value="NC_002692.1"/>
</dbReference>
<dbReference type="RefSeq" id="NP_078447.1">
    <property type="nucleotide sequence ID" value="NC_002692.1"/>
</dbReference>
<dbReference type="PDB" id="3VKW">
    <property type="method" value="X-ray"/>
    <property type="resolution" value="1.90 A"/>
    <property type="chains" value="A=666-1111"/>
</dbReference>
<dbReference type="PDB" id="3WRX">
    <property type="method" value="X-ray"/>
    <property type="resolution" value="2.50 A"/>
    <property type="chains" value="C/D=666-1116"/>
</dbReference>
<dbReference type="PDB" id="3WRY">
    <property type="method" value="X-ray"/>
    <property type="resolution" value="2.30 A"/>
    <property type="chains" value="C/D=666-1116"/>
</dbReference>
<dbReference type="PDBsum" id="3VKW"/>
<dbReference type="PDBsum" id="3WRX"/>
<dbReference type="PDBsum" id="3WRY"/>
<dbReference type="SMR" id="P03587"/>
<dbReference type="GeneID" id="920838"/>
<dbReference type="GeneID" id="920841"/>
<dbReference type="KEGG" id="vg:920838"/>
<dbReference type="KEGG" id="vg:920841"/>
<dbReference type="EvolutionaryTrace" id="P03587"/>
<dbReference type="Proteomes" id="UP000001451">
    <property type="component" value="Genome"/>
</dbReference>
<dbReference type="GO" id="GO:0005524">
    <property type="term" value="F:ATP binding"/>
    <property type="evidence" value="ECO:0007669"/>
    <property type="project" value="UniProtKB-KW"/>
</dbReference>
<dbReference type="GO" id="GO:0016887">
    <property type="term" value="F:ATP hydrolysis activity"/>
    <property type="evidence" value="ECO:0007669"/>
    <property type="project" value="RHEA"/>
</dbReference>
<dbReference type="GO" id="GO:0008174">
    <property type="term" value="F:mRNA methyltransferase activity"/>
    <property type="evidence" value="ECO:0007669"/>
    <property type="project" value="InterPro"/>
</dbReference>
<dbReference type="GO" id="GO:0003723">
    <property type="term" value="F:RNA binding"/>
    <property type="evidence" value="ECO:0007669"/>
    <property type="project" value="InterPro"/>
</dbReference>
<dbReference type="GO" id="GO:0003724">
    <property type="term" value="F:RNA helicase activity"/>
    <property type="evidence" value="ECO:0007669"/>
    <property type="project" value="UniProtKB-EC"/>
</dbReference>
<dbReference type="GO" id="GO:0003968">
    <property type="term" value="F:RNA-directed RNA polymerase activity"/>
    <property type="evidence" value="ECO:0007669"/>
    <property type="project" value="UniProtKB-KW"/>
</dbReference>
<dbReference type="GO" id="GO:0006351">
    <property type="term" value="P:DNA-templated transcription"/>
    <property type="evidence" value="ECO:0007669"/>
    <property type="project" value="InterPro"/>
</dbReference>
<dbReference type="GO" id="GO:0016556">
    <property type="term" value="P:mRNA modification"/>
    <property type="evidence" value="ECO:0007669"/>
    <property type="project" value="InterPro"/>
</dbReference>
<dbReference type="GO" id="GO:0006396">
    <property type="term" value="P:RNA processing"/>
    <property type="evidence" value="ECO:0007669"/>
    <property type="project" value="InterPro"/>
</dbReference>
<dbReference type="GO" id="GO:0052170">
    <property type="term" value="P:symbiont-mediated suppression of host innate immune response"/>
    <property type="evidence" value="ECO:0007669"/>
    <property type="project" value="UniProtKB-KW"/>
</dbReference>
<dbReference type="GO" id="GO:0039694">
    <property type="term" value="P:viral RNA genome replication"/>
    <property type="evidence" value="ECO:0007669"/>
    <property type="project" value="InterPro"/>
</dbReference>
<dbReference type="CDD" id="cd23251">
    <property type="entry name" value="Virgaviridae_RdRp"/>
    <property type="match status" value="1"/>
</dbReference>
<dbReference type="Gene3D" id="3.30.450.420">
    <property type="match status" value="1"/>
</dbReference>
<dbReference type="Gene3D" id="3.40.50.300">
    <property type="entry name" value="P-loop containing nucleotide triphosphate hydrolases"/>
    <property type="match status" value="2"/>
</dbReference>
<dbReference type="InterPro" id="IPR027351">
    <property type="entry name" value="(+)RNA_virus_helicase_core_dom"/>
</dbReference>
<dbReference type="InterPro" id="IPR002588">
    <property type="entry name" value="Alphavirus-like_MT_dom"/>
</dbReference>
<dbReference type="InterPro" id="IPR043502">
    <property type="entry name" value="DNA/RNA_pol_sf"/>
</dbReference>
<dbReference type="InterPro" id="IPR027417">
    <property type="entry name" value="P-loop_NTPase"/>
</dbReference>
<dbReference type="InterPro" id="IPR001788">
    <property type="entry name" value="RNA-dep_RNA_pol_alsuvir"/>
</dbReference>
<dbReference type="InterPro" id="IPR007094">
    <property type="entry name" value="RNA-dir_pol_PSvirus"/>
</dbReference>
<dbReference type="InterPro" id="IPR047310">
    <property type="entry name" value="Virgaviridae_RdRp"/>
</dbReference>
<dbReference type="Pfam" id="PF00978">
    <property type="entry name" value="RdRP_2"/>
    <property type="match status" value="1"/>
</dbReference>
<dbReference type="Pfam" id="PF01443">
    <property type="entry name" value="Viral_helicase1"/>
    <property type="match status" value="1"/>
</dbReference>
<dbReference type="Pfam" id="PF01660">
    <property type="entry name" value="Vmethyltransf"/>
    <property type="match status" value="1"/>
</dbReference>
<dbReference type="SUPFAM" id="SSF56672">
    <property type="entry name" value="DNA/RNA polymerases"/>
    <property type="match status" value="1"/>
</dbReference>
<dbReference type="SUPFAM" id="SSF52540">
    <property type="entry name" value="P-loop containing nucleoside triphosphate hydrolases"/>
    <property type="match status" value="1"/>
</dbReference>
<dbReference type="PROSITE" id="PS51743">
    <property type="entry name" value="ALPHAVIRUS_MT"/>
    <property type="match status" value="1"/>
</dbReference>
<dbReference type="PROSITE" id="PS51657">
    <property type="entry name" value="PSRV_HELICASE"/>
    <property type="match status" value="1"/>
</dbReference>
<dbReference type="PROSITE" id="PS50507">
    <property type="entry name" value="RDRP_SSRNA_POS"/>
    <property type="match status" value="1"/>
</dbReference>
<keyword id="KW-0002">3D-structure</keyword>
<keyword id="KW-0067">ATP-binding</keyword>
<keyword id="KW-0347">Helicase</keyword>
<keyword id="KW-0945">Host-virus interaction</keyword>
<keyword id="KW-0378">Hydrolase</keyword>
<keyword id="KW-1090">Inhibition of host innate immune response by virus</keyword>
<keyword id="KW-0547">Nucleotide-binding</keyword>
<keyword id="KW-0548">Nucleotidyltransferase</keyword>
<keyword id="KW-1159">RNA suppression of termination</keyword>
<keyword id="KW-0696">RNA-directed RNA polymerase</keyword>
<keyword id="KW-0941">Suppressor of RNA silencing</keyword>
<keyword id="KW-0808">Transferase</keyword>
<keyword id="KW-0899">Viral immunoevasion</keyword>
<keyword id="KW-0693">Viral RNA replication</keyword>
<name>RDRP_TOML</name>
<organism>
    <name type="scientific">Tomato mosaic virus (strain L)</name>
    <name type="common">ToMV</name>
    <name type="synonym">TMV strain tomato</name>
    <dbReference type="NCBI Taxonomy" id="12252"/>
    <lineage>
        <taxon>Viruses</taxon>
        <taxon>Riboviria</taxon>
        <taxon>Orthornavirae</taxon>
        <taxon>Kitrinoviricota</taxon>
        <taxon>Alsuviricetes</taxon>
        <taxon>Martellivirales</taxon>
        <taxon>Virgaviridae</taxon>
        <taxon>Tobamovirus</taxon>
        <taxon>Tobacco mosaic virus</taxon>
    </lineage>
</organism>
<accession>P03587</accession>
<accession>O41352</accession>
<proteinExistence type="evidence at protein level"/>
<organismHost>
    <name type="scientific">Antirrhinum majus</name>
    <name type="common">Garden snapdragon</name>
    <dbReference type="NCBI Taxonomy" id="4151"/>
</organismHost>
<organismHost>
    <name type="scientific">Capsicum</name>
    <name type="common">peppers</name>
    <dbReference type="NCBI Taxonomy" id="4071"/>
</organismHost>
<organismHost>
    <name type="scientific">Delphinium</name>
    <dbReference type="NCBI Taxonomy" id="46246"/>
</organismHost>
<organismHost>
    <name type="scientific">Petunia</name>
    <dbReference type="NCBI Taxonomy" id="4101"/>
</organismHost>
<organismHost>
    <name type="scientific">Solanum lycopersicum</name>
    <name type="common">Tomato</name>
    <name type="synonym">Lycopersicon esculentum</name>
    <dbReference type="NCBI Taxonomy" id="4081"/>
</organismHost>
<organismHost>
    <name type="scientific">Tagetes</name>
    <name type="common">marigolds</name>
    <dbReference type="NCBI Taxonomy" id="13707"/>
</organismHost>
<comment type="function">
    <molecule>Replicase large subunit</molecule>
    <text evidence="5">Is an RNA-dependent RNA polymerase active in viral RNA replication.</text>
</comment>
<comment type="function">
    <molecule>Replicase small subunit</molecule>
    <text evidence="1 11">Is a methyltransferase active in RNA capping and an RNA helicase. Methyltransferase displays a cytoplasmic capping enzyme activity. This function is necessary since all viral RNAs are synthesized in the cytoplasm, and host capping enzymes are restricted to the nucleus. Helicase region probably exhibits NTPase and RNA unwinding activities (Potential). It also acts as a suppressor of RNA-mediated gene silencing, also known as post-transcriptional gene silencing (PTGS), a mechanism of plant viral defense that limits the accumulation of viral RNAs. May mediate silencing suppression through either inhibition of HEN1-mediated siRNA or siRNA demethylation (By similarity).</text>
</comment>
<comment type="catalytic activity">
    <reaction evidence="2">
        <text>RNA(n) + a ribonucleoside 5'-triphosphate = RNA(n+1) + diphosphate</text>
        <dbReference type="Rhea" id="RHEA:21248"/>
        <dbReference type="Rhea" id="RHEA-COMP:14527"/>
        <dbReference type="Rhea" id="RHEA-COMP:17342"/>
        <dbReference type="ChEBI" id="CHEBI:33019"/>
        <dbReference type="ChEBI" id="CHEBI:61557"/>
        <dbReference type="ChEBI" id="CHEBI:140395"/>
        <dbReference type="EC" id="2.7.7.48"/>
    </reaction>
</comment>
<comment type="catalytic activity">
    <reaction>
        <text>ATP + H2O = ADP + phosphate + H(+)</text>
        <dbReference type="Rhea" id="RHEA:13065"/>
        <dbReference type="ChEBI" id="CHEBI:15377"/>
        <dbReference type="ChEBI" id="CHEBI:15378"/>
        <dbReference type="ChEBI" id="CHEBI:30616"/>
        <dbReference type="ChEBI" id="CHEBI:43474"/>
        <dbReference type="ChEBI" id="CHEBI:456216"/>
        <dbReference type="EC" id="3.6.4.13"/>
    </reaction>
</comment>
<comment type="activity regulation">
    <text evidence="7 8 9">In resistant plants, is bound by host protein Tm-1 (e.g. tomato Tm-1 AC A7M6E7), thereby inhibiting replication complex activity.</text>
</comment>
<comment type="subunit">
    <text evidence="1 7 8">Heterodimer of a large and a small subunit (By similarity). May interact with the host proteins TOM1 and ARL8. Interacts via an ATP bridge, with host protein Tm-1 (e.g. tomato Tm-1 AC A7M6E7) (PubMed:17699618, PubMed:25092327).</text>
</comment>
<comment type="miscellaneous">
    <text>This protein is translated as a fusion protein by episodic readthrough of a termination codon. When readthrough of the terminator codon TGA occurs between the codons for Gln-1116 and Gln-1118, this results in the addition of the RdRp region to the replicase.</text>
</comment>
<comment type="similarity">
    <text evidence="11">Belongs to the ssRNA positive-strand viruses RNA-directed RNA polymerase family.</text>
</comment>
<feature type="chain" id="PRO_0000041194" description="Replicase large subunit">
    <location>
        <begin position="1"/>
        <end position="1616"/>
    </location>
</feature>
<feature type="chain" id="PRO_0000041195" description="Replicase small subunit">
    <location>
        <begin position="1"/>
        <end position="1116"/>
    </location>
</feature>
<feature type="domain" description="Alphavirus-like MT" evidence="4">
    <location>
        <begin position="72"/>
        <end position="281"/>
    </location>
</feature>
<feature type="domain" description="(+)RNA virus helicase ATP-binding" evidence="3">
    <location>
        <begin position="801"/>
        <end position="963"/>
    </location>
</feature>
<feature type="domain" description="(+)RNA virus helicase C-terminal" evidence="3">
    <location>
        <begin position="964"/>
        <end position="1116"/>
    </location>
</feature>
<feature type="domain" description="RdRp catalytic" evidence="2">
    <location>
        <begin position="1380"/>
        <end position="1493"/>
    </location>
</feature>
<feature type="region of interest" description="Methyltransferase">
    <location>
        <begin position="50"/>
        <end position="458"/>
    </location>
</feature>
<feature type="region of interest" description="Helicase">
    <location>
        <begin position="830"/>
        <end position="1085"/>
    </location>
</feature>
<feature type="binding site" evidence="3 8 12 13">
    <location>
        <begin position="836"/>
        <end position="841"/>
    </location>
    <ligand>
        <name>ATP</name>
        <dbReference type="ChEBI" id="CHEBI:30616"/>
    </ligand>
</feature>
<feature type="binding site" evidence="8 12 13">
    <location>
        <position position="868"/>
    </location>
    <ligand>
        <name>ATP</name>
        <dbReference type="ChEBI" id="CHEBI:30616"/>
    </ligand>
</feature>
<feature type="binding site" evidence="8 12 13">
    <location>
        <begin position="967"/>
        <end position="968"/>
    </location>
    <ligand>
        <name>ATP</name>
        <dbReference type="ChEBI" id="CHEBI:30616"/>
    </ligand>
</feature>
<feature type="binding site" evidence="8 12 13">
    <location>
        <position position="1076"/>
    </location>
    <ligand>
        <name>ATP</name>
        <dbReference type="ChEBI" id="CHEBI:30616"/>
    </ligand>
</feature>
<feature type="binding site" evidence="8 12 13">
    <location>
        <begin position="1097"/>
        <end position="1100"/>
    </location>
    <ligand>
        <name>ATP</name>
        <dbReference type="ChEBI" id="CHEBI:30616"/>
    </ligand>
</feature>
<feature type="mutagenesis site" description="Loss of RNA silencing suppression activity." evidence="5">
    <original>C</original>
    <variation>A</variation>
    <location>
        <position position="349"/>
    </location>
</feature>
<feature type="mutagenesis site" description="Overcome tomato Tm-1-mediated resistance (AC A7M6E7) thus leading to increased infectivity in resistant tomato plants." evidence="10">
    <original>Q</original>
    <variation>D</variation>
    <variation>K</variation>
    <location>
        <position position="979"/>
    </location>
</feature>
<feature type="mutagenesis site" description="Normal tomato Tm-1-mediated resistance (AC A7M6E7) leading to impaired infectivity in resistant tomato plants." evidence="10">
    <original>Q</original>
    <variation>H</variation>
    <location>
        <position position="979"/>
    </location>
</feature>
<feature type="mutagenesis site" description="Overcome partially tomato Tm-1-mediated resistance (AC A7M6E7) thus leading to increased infectivity in resistant tomato plants." evidence="10">
    <original>Q</original>
    <variation>N</variation>
    <variation>R</variation>
    <location>
        <position position="979"/>
    </location>
</feature>
<feature type="mutagenesis site" description="In ToMV1-2; overcome tomato Tm-1-mediated resistance thus leading to increased infectivity in resistant tomato plants; when associated with Q-1100." evidence="6">
    <original>D</original>
    <variation>V</variation>
    <location>
        <position position="1097"/>
    </location>
</feature>
<feature type="mutagenesis site" description="In ToMV1-2; overcome tomato Tm-1-mediated resistance thus leading to increased infectivity in resistant tomato plants; when associated with V-1097." evidence="6">
    <original>R</original>
    <variation>Q</variation>
    <location>
        <position position="1100"/>
    </location>
</feature>
<feature type="helix" evidence="15">
    <location>
        <begin position="672"/>
        <end position="675"/>
    </location>
</feature>
<feature type="helix" evidence="14">
    <location>
        <begin position="676"/>
        <end position="679"/>
    </location>
</feature>
<feature type="helix" evidence="14">
    <location>
        <begin position="684"/>
        <end position="687"/>
    </location>
</feature>
<feature type="helix" evidence="14">
    <location>
        <begin position="701"/>
        <end position="729"/>
    </location>
</feature>
<feature type="strand" evidence="14">
    <location>
        <begin position="730"/>
        <end position="732"/>
    </location>
</feature>
<feature type="strand" evidence="14">
    <location>
        <begin position="740"/>
        <end position="746"/>
    </location>
</feature>
<feature type="turn" evidence="14">
    <location>
        <begin position="747"/>
        <end position="750"/>
    </location>
</feature>
<feature type="strand" evidence="14">
    <location>
        <begin position="751"/>
        <end position="754"/>
    </location>
</feature>
<feature type="strand" evidence="14">
    <location>
        <begin position="756"/>
        <end position="758"/>
    </location>
</feature>
<feature type="strand" evidence="14">
    <location>
        <begin position="762"/>
        <end position="768"/>
    </location>
</feature>
<feature type="strand" evidence="14">
    <location>
        <begin position="773"/>
        <end position="777"/>
    </location>
</feature>
<feature type="strand" evidence="14">
    <location>
        <begin position="782"/>
        <end position="784"/>
    </location>
</feature>
<feature type="strand" evidence="14">
    <location>
        <begin position="791"/>
        <end position="797"/>
    </location>
</feature>
<feature type="helix" evidence="14">
    <location>
        <begin position="798"/>
        <end position="800"/>
    </location>
</feature>
<feature type="helix" evidence="14">
    <location>
        <begin position="804"/>
        <end position="813"/>
    </location>
</feature>
<feature type="strand" evidence="15">
    <location>
        <begin position="817"/>
        <end position="819"/>
    </location>
</feature>
<feature type="strand" evidence="14">
    <location>
        <begin position="826"/>
        <end position="833"/>
    </location>
</feature>
<feature type="helix" evidence="14">
    <location>
        <begin position="839"/>
        <end position="846"/>
    </location>
</feature>
<feature type="turn" evidence="14">
    <location>
        <begin position="849"/>
        <end position="851"/>
    </location>
</feature>
<feature type="strand" evidence="14">
    <location>
        <begin position="853"/>
        <end position="857"/>
    </location>
</feature>
<feature type="helix" evidence="14">
    <location>
        <begin position="859"/>
        <end position="869"/>
    </location>
</feature>
<feature type="turn" evidence="14">
    <location>
        <begin position="870"/>
        <end position="872"/>
    </location>
</feature>
<feature type="turn" evidence="14">
    <location>
        <begin position="879"/>
        <end position="881"/>
    </location>
</feature>
<feature type="strand" evidence="14">
    <location>
        <begin position="882"/>
        <end position="884"/>
    </location>
</feature>
<feature type="helix" evidence="14">
    <location>
        <begin position="885"/>
        <end position="890"/>
    </location>
</feature>
<feature type="turn" evidence="14">
    <location>
        <begin position="891"/>
        <end position="893"/>
    </location>
</feature>
<feature type="strand" evidence="15">
    <location>
        <begin position="894"/>
        <end position="896"/>
    </location>
</feature>
<feature type="strand" evidence="14">
    <location>
        <begin position="901"/>
        <end position="905"/>
    </location>
</feature>
<feature type="helix" evidence="14">
    <location>
        <begin position="908"/>
        <end position="910"/>
    </location>
</feature>
<feature type="helix" evidence="14">
    <location>
        <begin position="913"/>
        <end position="922"/>
    </location>
</feature>
<feature type="strand" evidence="14">
    <location>
        <begin position="926"/>
        <end position="932"/>
    </location>
</feature>
<feature type="helix" evidence="14">
    <location>
        <begin position="950"/>
        <end position="953"/>
    </location>
</feature>
<feature type="strand" evidence="14">
    <location>
        <begin position="958"/>
        <end position="963"/>
    </location>
</feature>
<feature type="strand" evidence="14">
    <location>
        <begin position="965"/>
        <end position="968"/>
    </location>
</feature>
<feature type="helix" evidence="14">
    <location>
        <begin position="971"/>
        <end position="978"/>
    </location>
</feature>
<feature type="strand" evidence="14">
    <location>
        <begin position="981"/>
        <end position="983"/>
    </location>
</feature>
<feature type="strand" evidence="14">
    <location>
        <begin position="995"/>
        <end position="999"/>
    </location>
</feature>
<feature type="helix" evidence="14">
    <location>
        <begin position="1003"/>
        <end position="1005"/>
    </location>
</feature>
<feature type="turn" evidence="14">
    <location>
        <begin position="1008"/>
        <end position="1010"/>
    </location>
</feature>
<feature type="strand" evidence="14">
    <location>
        <begin position="1015"/>
        <end position="1021"/>
    </location>
</feature>
<feature type="helix" evidence="14">
    <location>
        <begin position="1022"/>
        <end position="1029"/>
    </location>
</feature>
<feature type="turn" evidence="14">
    <location>
        <begin position="1030"/>
        <end position="1032"/>
    </location>
</feature>
<feature type="strand" evidence="15">
    <location>
        <begin position="1034"/>
        <end position="1038"/>
    </location>
</feature>
<feature type="helix" evidence="14">
    <location>
        <begin position="1040"/>
        <end position="1042"/>
    </location>
</feature>
<feature type="strand" evidence="14">
    <location>
        <begin position="1047"/>
        <end position="1054"/>
    </location>
</feature>
<feature type="helix" evidence="14">
    <location>
        <begin position="1068"/>
        <end position="1074"/>
    </location>
</feature>
<feature type="strand" evidence="14">
    <location>
        <begin position="1075"/>
        <end position="1087"/>
    </location>
</feature>
<feature type="helix" evidence="14">
    <location>
        <begin position="1090"/>
        <end position="1100"/>
    </location>
</feature>
<feature type="helix" evidence="14">
    <location>
        <begin position="1103"/>
        <end position="1107"/>
    </location>
</feature>
<sequence>MAYTQTATSSALLETVRGNNTLVNDLAKRRLYDTAVDEFNARDRRPKVNFSKVVSEEQTLIATKAYPEFQITFYNTQNAVHSLAGGLRSLELEYLMMQIPYGSLTYDIGGNFASHLFKGRAYVHCCMPNLDVRDIMRHEGQKDSIELYLSRLERGNKHVPNFQKEAFDRYAEMPNEVVCHDTFQTCRHSQECYTGRVYAIALHSIYDIPADEFGAALLRKNVHVCYAAFHFSENLLLEDSHVNLDEINACFQRDGDRLTFSFASESTLNYSHSYSNILKYVCKTYFPASNREVYMKEFLVTRVNTWFCKFSRIDTFLLYKGVAHKGVDSEQFYKAMEDAWHYKKTLAMCNSERILLEDSSSVNYWFPKMRDMVIVPLFDISLETSKRTRKEVLVSKDFVYTVLNHIRTYQAKALTYSNVLSFVESIRSRVIINGVTARSEWDVDKSLLQSLSMTFFLHTKLAVLKDDLLISKFALGPKTVSQHVWDEISLAFGNAFPSIKERLINRKLIKITENALEIRVPDLYVTFHDRLVSEYKMSVDMPVLDIRKKMEETEEMYNALSELSVLKNSDKFDVDVFSQMCQSLEVDPMTAAKVIVAVMSNESGLTLTFEQPTEANVALALQDSEKASDGALVVTSRDVEEPSIKGSMARGELQLAGLSGDVPESSYTRSEEIESLEQFHMATASSLIHKQMCSIVYTGPLKVQQMKNFIDSLVASLSAAVSNLVKILKDTAAIDLETRQKFGVLDVASKRWLVKPSAKNHAWGVVETHARKYHVALLEHDEFGIITCDNWRRVAVSSESVVYSDMAKLRTLRRLLKDGEPHVSSAKVVLVDGVPGCGKTKEILSRVNFEEDLILVPGRQAAEMIRRRANASGIIVATKDNVRTVDSFLMNYGKGARCQFKRLFIDEGLMLHTGCVNFLVEMSLCDIAYVYGDTQQIPYINRVTGFPYPAHFAKLEVDEVETRRTTLRCPADVTHFLNQRYEGHVMCTSSEKKSVSQEMVSGAASINPVSKPLKGKILTFTQSDKEALLSRGYADVHTVHEVQGETYADVSLVRLTPTPVSIIARDSPHVLVSLSRHTKSLKYYTVVMDPLVSIIRDLERVSSYLLDMYKVDAGTQXQLQVDSVFKNFNLFVAAPKTGDISDMQFYYDKCLPGNSTLLNNYDAVTMKLTDISLNVKDCILDMSKSVAAPKDVKPTLIPMVRTAAEMPRQTGLLENLVAMIKRNFNSPELSGVVDIENTASLVVDKFFDSYLLKEKRKPNKNFSLFSRESLNRWIAKQEQVTIGQLADFDFVDLPAVDQYRHMIKAQPKQKLDLSIQTEYPALQTIVYHSKKINAIFGPLFSELTRQLLDSIDSSRFLFFTRKTPAQIEDFFGDLDSHVPMDVLELDVSKYDKSQNEFHCAVEYEIWRRLGLEDFLAEVWKQGHRKTTLKDYTAGIKTCLWYQRKSGDVTTFIGNTVIIASCLASMLPMEKLIKGAFCGDDSLLYFPKGCEYPDIQQAANLMWNFEAKLFKKQYGYFCGRYVIHHDRGCIVYYDPLKLISKLGAKHIKDWDHLEEFRRSLCDVAESLNNCAYYTQLDDAVGEVHKTAPPGSFVYKSLVKYLSDKVLFRSLFLDGSSC</sequence>
<reference key="1">
    <citation type="journal article" date="1984" name="J. Biochem.">
        <title>Nucleotide sequence of the tobacco mosaic virus (tomato strain) genome and comparison with the common strain genome.</title>
        <authorList>
            <person name="Ohno T."/>
            <person name="Aoyagi M."/>
            <person name="Yamanashi Y."/>
            <person name="Saito H."/>
            <person name="Ikawa S."/>
            <person name="Meshi T."/>
            <person name="Okada Y."/>
        </authorList>
    </citation>
    <scope>NUCLEOTIDE SEQUENCE [GENOMIC RNA]</scope>
</reference>
<reference key="2">
    <citation type="journal article" date="1987" name="Virology">
        <title>Characterization of Tm-1 gene action on replication of common isolates and a resistance-breaking isolate of TMV.</title>
        <authorList>
            <person name="Watanabe Y."/>
            <person name="Kishibayashi N."/>
            <person name="Motoyoshi F."/>
            <person name="Okada Y."/>
        </authorList>
    </citation>
    <scope>ACTIVITY REGULATION</scope>
</reference>
<reference key="3">
    <citation type="journal article" date="1997" name="J. Gen. Virol.">
        <title>Amino acid changes in the putative replicase of tomato mosaic tobamovirus that overcome resistance in Tm-1 tomato.</title>
        <authorList>
            <person name="Hamamoto H."/>
            <person name="Watanabe Y."/>
            <person name="Kamada H."/>
            <person name="Okada Y."/>
        </authorList>
    </citation>
    <scope>MUTAGENESIS OF GLN-979</scope>
</reference>
<reference key="4">
    <citation type="journal article" date="2003" name="J. Virol.">
        <title>Tomato mosaic virus replication protein suppresses virus-targeted posttranscriptional gene silencing.</title>
        <authorList>
            <person name="Kubota K."/>
            <person name="Tsuda S."/>
            <person name="Tamai A."/>
            <person name="Meshi T."/>
        </authorList>
    </citation>
    <scope>FUNCTION</scope>
    <scope>MUTAGENESIS OF CYS-349</scope>
</reference>
<reference key="5">
    <citation type="journal article" date="2007" name="Arch. Virol.">
        <title>The double-resistance-breaking Tomato mosaic virus strain ToMV1-2 contains two independent single resistance-breaking domains.</title>
        <authorList>
            <person name="Strasser M."/>
            <person name="Pfitzner A.J.P."/>
        </authorList>
    </citation>
    <scope>MUTAGENESIS OF ASP-1097 AND ARG-1100</scope>
    <source>
        <strain>cv. Craigella GCR237</strain>
        <strain>cv. Craigella GCR254</strain>
    </source>
</reference>
<reference key="6">
    <citation type="journal article" date="2007" name="Proc. Natl. Acad. Sci. U.S.A.">
        <title>An inhibitor of viral RNA replication is encoded by a plant resistance gene.</title>
        <authorList>
            <person name="Ishibashi K."/>
            <person name="Masuda K."/>
            <person name="Naito S."/>
            <person name="Meshi T."/>
            <person name="Ishikawa M."/>
        </authorList>
    </citation>
    <scope>INTERACTION WITH HOST PROTEIN TM-1</scope>
    <scope>ACTIVITY REGULATION</scope>
    <source>
        <strain>cv. Craigella GCR237</strain>
    </source>
</reference>
<reference key="7">
    <citation type="journal article" date="2012" name="J. Virol.">
        <title>Crystal structure of the superfamily 1 helicase from Tomato mosaic virus.</title>
        <authorList>
            <person name="Nishikiori M."/>
            <person name="Sugiyama S."/>
            <person name="Xiang H."/>
            <person name="Niiyama M."/>
            <person name="Ishibashi K."/>
            <person name="Inoue T."/>
            <person name="Ishikawa M."/>
            <person name="Matsumura H."/>
            <person name="Katoh E."/>
        </authorList>
    </citation>
    <scope>X-RAY CRYSTALLOGRAPHY (1.9 ANGSTROMS) OF 666-1111</scope>
    <scope>INTERACTION WITH HOST PROTEINS TOM1 AND ARL8</scope>
</reference>
<reference key="8">
    <citation type="journal article" date="2014" name="Proc. Natl. Acad. Sci. U.S.A.">
        <title>Structural basis for the recognition-evasion arms race between Tomato mosaic virus and the resistance gene Tm-1.</title>
        <authorList>
            <person name="Ishibashi K."/>
            <person name="Kezuka Y."/>
            <person name="Kobayashi C."/>
            <person name="Kato M."/>
            <person name="Inoue T."/>
            <person name="Nonaka T."/>
            <person name="Ishikawa M."/>
            <person name="Matsumura H."/>
            <person name="Katoh E."/>
        </authorList>
    </citation>
    <scope>X-RAY CRYSTALLOGRAPHY (2.30 ANGSTROMS) OF 666-1116 IN COMPLEX WITH ATP AND TOMATO TM-1 PROTEIN</scope>
    <scope>ACTIVITY REGULATION</scope>
    <scope>INTERACTION WITH HOST PROTEIN TM-1</scope>
</reference>
<protein>
    <recommendedName>
        <fullName>Replicase large subunit</fullName>
        <ecNumber>2.1.1.-</ecNumber>
        <ecNumber>2.7.7.-</ecNumber>
        <ecNumber evidence="2">2.7.7.48</ecNumber>
        <ecNumber>3.6.4.13</ecNumber>
    </recommendedName>
    <alternativeName>
        <fullName>183 kDa protein</fullName>
    </alternativeName>
    <alternativeName>
        <fullName evidence="2">RNA-directed RNA polymerase</fullName>
    </alternativeName>
    <component>
        <recommendedName>
            <fullName>Replicase small subunit</fullName>
            <ecNumber>2.1.1.-</ecNumber>
            <ecNumber>2.7.7.-</ecNumber>
            <ecNumber>3.6.4.13</ecNumber>
        </recommendedName>
        <alternativeName>
            <fullName>126 kDa protein</fullName>
        </alternativeName>
        <alternativeName>
            <fullName>Methyltransferase/RNA helicase</fullName>
            <shortName>MT/HEL</shortName>
        </alternativeName>
    </component>
</protein>